<organism>
    <name type="scientific">Aliivibrio fischeri (strain ATCC 700601 / ES114)</name>
    <name type="common">Vibrio fischeri</name>
    <dbReference type="NCBI Taxonomy" id="312309"/>
    <lineage>
        <taxon>Bacteria</taxon>
        <taxon>Pseudomonadati</taxon>
        <taxon>Pseudomonadota</taxon>
        <taxon>Gammaproteobacteria</taxon>
        <taxon>Vibrionales</taxon>
        <taxon>Vibrionaceae</taxon>
        <taxon>Aliivibrio</taxon>
    </lineage>
</organism>
<reference key="1">
    <citation type="journal article" date="2005" name="Proc. Natl. Acad. Sci. U.S.A.">
        <title>Complete genome sequence of Vibrio fischeri: a symbiotic bacterium with pathogenic congeners.</title>
        <authorList>
            <person name="Ruby E.G."/>
            <person name="Urbanowski M."/>
            <person name="Campbell J."/>
            <person name="Dunn A."/>
            <person name="Faini M."/>
            <person name="Gunsalus R."/>
            <person name="Lostroh P."/>
            <person name="Lupp C."/>
            <person name="McCann J."/>
            <person name="Millikan D."/>
            <person name="Schaefer A."/>
            <person name="Stabb E."/>
            <person name="Stevens A."/>
            <person name="Visick K."/>
            <person name="Whistler C."/>
            <person name="Greenberg E.P."/>
        </authorList>
    </citation>
    <scope>NUCLEOTIDE SEQUENCE [LARGE SCALE GENOMIC DNA]</scope>
    <source>
        <strain>ATCC 700601 / ES114</strain>
    </source>
</reference>
<name>FADA_ALIF1</name>
<comment type="function">
    <text evidence="1">Catalyzes the final step of fatty acid oxidation in which acetyl-CoA is released and the CoA ester of a fatty acid two carbons shorter is formed.</text>
</comment>
<comment type="catalytic activity">
    <reaction evidence="1">
        <text>an acyl-CoA + acetyl-CoA = a 3-oxoacyl-CoA + CoA</text>
        <dbReference type="Rhea" id="RHEA:21564"/>
        <dbReference type="ChEBI" id="CHEBI:57287"/>
        <dbReference type="ChEBI" id="CHEBI:57288"/>
        <dbReference type="ChEBI" id="CHEBI:58342"/>
        <dbReference type="ChEBI" id="CHEBI:90726"/>
        <dbReference type="EC" id="2.3.1.16"/>
    </reaction>
</comment>
<comment type="pathway">
    <text evidence="1">Lipid metabolism; fatty acid beta-oxidation.</text>
</comment>
<comment type="subunit">
    <text evidence="1">Heterotetramer of two alpha chains (FadB) and two beta chains (FadA).</text>
</comment>
<comment type="subcellular location">
    <subcellularLocation>
        <location evidence="1">Cytoplasm</location>
    </subcellularLocation>
</comment>
<comment type="similarity">
    <text evidence="1">Belongs to the thiolase-like superfamily. Thiolase family.</text>
</comment>
<comment type="sequence caution" evidence="2">
    <conflict type="erroneous initiation">
        <sequence resource="EMBL-CDS" id="AAW84519"/>
    </conflict>
</comment>
<sequence>MKNVVIVDCIRTPMGRSKNGVFRHTRAEDLSAHLMKGLLKRNPSVDPNDIEDIYWGCVQQTLEQGFNIARNSALLAGLPQSIAATTVNRLCGSSMQALHDASRAIMVGDAEICIIGGVEHMGHVPMNHGVDFHSGLSKSVAKASGMMGLTAEMLGKMHGISREQQDAFALASHQKAHKATIEGYFDSEILPMEGHDENGALTLVTHDEVIRPETTLEGLAALRPAFDPANGTVTAGSSSALSDGASAMLVMSEEKANELGLPIRAKVRSMAVSGCDPSIMGYGPVPATKKALKRAGLSLDDIELFELNEAFAAQSLPCIKDLGLLDVMDEKVNLNGGAIALGHPLGCSGSRIATTLINNMERTGAKLGVATMCIGLGQGIATVFERP</sequence>
<accession>Q5E8X7</accession>
<evidence type="ECO:0000255" key="1">
    <source>
        <dbReference type="HAMAP-Rule" id="MF_01620"/>
    </source>
</evidence>
<evidence type="ECO:0000305" key="2"/>
<feature type="chain" id="PRO_0000206396" description="3-ketoacyl-CoA thiolase">
    <location>
        <begin position="1"/>
        <end position="387"/>
    </location>
</feature>
<feature type="active site" description="Acyl-thioester intermediate" evidence="1">
    <location>
        <position position="91"/>
    </location>
</feature>
<feature type="active site" description="Proton acceptor" evidence="1">
    <location>
        <position position="343"/>
    </location>
</feature>
<feature type="active site" description="Proton acceptor" evidence="1">
    <location>
        <position position="373"/>
    </location>
</feature>
<keyword id="KW-0012">Acyltransferase</keyword>
<keyword id="KW-0963">Cytoplasm</keyword>
<keyword id="KW-0276">Fatty acid metabolism</keyword>
<keyword id="KW-0442">Lipid degradation</keyword>
<keyword id="KW-0443">Lipid metabolism</keyword>
<keyword id="KW-1185">Reference proteome</keyword>
<keyword id="KW-0808">Transferase</keyword>
<dbReference type="EC" id="2.3.1.16" evidence="1"/>
<dbReference type="EMBL" id="CP000020">
    <property type="protein sequence ID" value="AAW84519.1"/>
    <property type="status" value="ALT_INIT"/>
    <property type="molecule type" value="Genomic_DNA"/>
</dbReference>
<dbReference type="RefSeq" id="WP_047863541.1">
    <property type="nucleotide sequence ID" value="NC_006840.2"/>
</dbReference>
<dbReference type="RefSeq" id="YP_203407.3">
    <property type="nucleotide sequence ID" value="NC_006840.2"/>
</dbReference>
<dbReference type="SMR" id="Q5E8X7"/>
<dbReference type="STRING" id="312309.VF_0024"/>
<dbReference type="EnsemblBacteria" id="AAW84519">
    <property type="protein sequence ID" value="AAW84519"/>
    <property type="gene ID" value="VF_0024"/>
</dbReference>
<dbReference type="GeneID" id="54162653"/>
<dbReference type="KEGG" id="vfi:VF_0024"/>
<dbReference type="PATRIC" id="fig|312309.11.peg.25"/>
<dbReference type="eggNOG" id="COG0183">
    <property type="taxonomic scope" value="Bacteria"/>
</dbReference>
<dbReference type="HOGENOM" id="CLU_031026_2_2_6"/>
<dbReference type="OrthoDB" id="8951704at2"/>
<dbReference type="UniPathway" id="UPA00659"/>
<dbReference type="Proteomes" id="UP000000537">
    <property type="component" value="Chromosome I"/>
</dbReference>
<dbReference type="GO" id="GO:0005737">
    <property type="term" value="C:cytoplasm"/>
    <property type="evidence" value="ECO:0007669"/>
    <property type="project" value="UniProtKB-SubCell"/>
</dbReference>
<dbReference type="GO" id="GO:0003988">
    <property type="term" value="F:acetyl-CoA C-acyltransferase activity"/>
    <property type="evidence" value="ECO:0007669"/>
    <property type="project" value="UniProtKB-UniRule"/>
</dbReference>
<dbReference type="GO" id="GO:0006635">
    <property type="term" value="P:fatty acid beta-oxidation"/>
    <property type="evidence" value="ECO:0007669"/>
    <property type="project" value="UniProtKB-UniRule"/>
</dbReference>
<dbReference type="GO" id="GO:0010124">
    <property type="term" value="P:phenylacetate catabolic process"/>
    <property type="evidence" value="ECO:0007669"/>
    <property type="project" value="TreeGrafter"/>
</dbReference>
<dbReference type="CDD" id="cd00751">
    <property type="entry name" value="thiolase"/>
    <property type="match status" value="1"/>
</dbReference>
<dbReference type="FunFam" id="3.40.47.10:FF:000010">
    <property type="entry name" value="Acetyl-CoA acetyltransferase (Thiolase)"/>
    <property type="match status" value="1"/>
</dbReference>
<dbReference type="Gene3D" id="3.40.47.10">
    <property type="match status" value="2"/>
</dbReference>
<dbReference type="HAMAP" id="MF_01620">
    <property type="entry name" value="FadA"/>
    <property type="match status" value="1"/>
</dbReference>
<dbReference type="InterPro" id="IPR012805">
    <property type="entry name" value="FadA"/>
</dbReference>
<dbReference type="InterPro" id="IPR002155">
    <property type="entry name" value="Thiolase"/>
</dbReference>
<dbReference type="InterPro" id="IPR016039">
    <property type="entry name" value="Thiolase-like"/>
</dbReference>
<dbReference type="InterPro" id="IPR050215">
    <property type="entry name" value="Thiolase-like_sf_Thiolase"/>
</dbReference>
<dbReference type="InterPro" id="IPR020615">
    <property type="entry name" value="Thiolase_acyl_enz_int_AS"/>
</dbReference>
<dbReference type="InterPro" id="IPR020610">
    <property type="entry name" value="Thiolase_AS"/>
</dbReference>
<dbReference type="InterPro" id="IPR020617">
    <property type="entry name" value="Thiolase_C"/>
</dbReference>
<dbReference type="InterPro" id="IPR020613">
    <property type="entry name" value="Thiolase_CS"/>
</dbReference>
<dbReference type="InterPro" id="IPR020616">
    <property type="entry name" value="Thiolase_N"/>
</dbReference>
<dbReference type="NCBIfam" id="TIGR01930">
    <property type="entry name" value="AcCoA-C-Actrans"/>
    <property type="match status" value="1"/>
</dbReference>
<dbReference type="NCBIfam" id="TIGR02445">
    <property type="entry name" value="fadA"/>
    <property type="match status" value="1"/>
</dbReference>
<dbReference type="NCBIfam" id="NF006510">
    <property type="entry name" value="PRK08947.1"/>
    <property type="match status" value="1"/>
</dbReference>
<dbReference type="PANTHER" id="PTHR43853:SF11">
    <property type="entry name" value="3-KETOACYL-COA THIOLASE FADA"/>
    <property type="match status" value="1"/>
</dbReference>
<dbReference type="PANTHER" id="PTHR43853">
    <property type="entry name" value="3-KETOACYL-COA THIOLASE, PEROXISOMAL"/>
    <property type="match status" value="1"/>
</dbReference>
<dbReference type="Pfam" id="PF02803">
    <property type="entry name" value="Thiolase_C"/>
    <property type="match status" value="1"/>
</dbReference>
<dbReference type="Pfam" id="PF00108">
    <property type="entry name" value="Thiolase_N"/>
    <property type="match status" value="1"/>
</dbReference>
<dbReference type="PIRSF" id="PIRSF000429">
    <property type="entry name" value="Ac-CoA_Ac_transf"/>
    <property type="match status" value="1"/>
</dbReference>
<dbReference type="SUPFAM" id="SSF53901">
    <property type="entry name" value="Thiolase-like"/>
    <property type="match status" value="2"/>
</dbReference>
<dbReference type="PROSITE" id="PS00098">
    <property type="entry name" value="THIOLASE_1"/>
    <property type="match status" value="1"/>
</dbReference>
<dbReference type="PROSITE" id="PS00737">
    <property type="entry name" value="THIOLASE_2"/>
    <property type="match status" value="1"/>
</dbReference>
<dbReference type="PROSITE" id="PS00099">
    <property type="entry name" value="THIOLASE_3"/>
    <property type="match status" value="1"/>
</dbReference>
<protein>
    <recommendedName>
        <fullName evidence="1">3-ketoacyl-CoA thiolase</fullName>
        <ecNumber evidence="1">2.3.1.16</ecNumber>
    </recommendedName>
    <alternativeName>
        <fullName evidence="1">Acetyl-CoA acyltransferase</fullName>
    </alternativeName>
    <alternativeName>
        <fullName evidence="1">Beta-ketothiolase</fullName>
    </alternativeName>
    <alternativeName>
        <fullName evidence="1">Fatty acid oxidation complex subunit beta</fullName>
    </alternativeName>
</protein>
<gene>
    <name evidence="1" type="primary">fadA</name>
    <name type="ordered locus">VF_0024</name>
</gene>
<proteinExistence type="inferred from homology"/>